<accession>Q0AEP7</accession>
<evidence type="ECO:0000255" key="1">
    <source>
        <dbReference type="HAMAP-Rule" id="MF_00259"/>
    </source>
</evidence>
<feature type="chain" id="PRO_1000047682" description="Aminomethyltransferase">
    <location>
        <begin position="1"/>
        <end position="363"/>
    </location>
</feature>
<comment type="function">
    <text evidence="1">The glycine cleavage system catalyzes the degradation of glycine.</text>
</comment>
<comment type="catalytic activity">
    <reaction evidence="1">
        <text>N(6)-[(R)-S(8)-aminomethyldihydrolipoyl]-L-lysyl-[protein] + (6S)-5,6,7,8-tetrahydrofolate = N(6)-[(R)-dihydrolipoyl]-L-lysyl-[protein] + (6R)-5,10-methylene-5,6,7,8-tetrahydrofolate + NH4(+)</text>
        <dbReference type="Rhea" id="RHEA:16945"/>
        <dbReference type="Rhea" id="RHEA-COMP:10475"/>
        <dbReference type="Rhea" id="RHEA-COMP:10492"/>
        <dbReference type="ChEBI" id="CHEBI:15636"/>
        <dbReference type="ChEBI" id="CHEBI:28938"/>
        <dbReference type="ChEBI" id="CHEBI:57453"/>
        <dbReference type="ChEBI" id="CHEBI:83100"/>
        <dbReference type="ChEBI" id="CHEBI:83143"/>
        <dbReference type="EC" id="2.1.2.10"/>
    </reaction>
</comment>
<comment type="subunit">
    <text evidence="1">The glycine cleavage system is composed of four proteins: P, T, L and H.</text>
</comment>
<comment type="similarity">
    <text evidence="1">Belongs to the GcvT family.</text>
</comment>
<name>GCST_NITEC</name>
<gene>
    <name evidence="1" type="primary">gcvT</name>
    <name type="ordered locus">Neut_1955</name>
</gene>
<sequence>MLKTTPLNAAHRGMHAKMVDFGGWDMPLHYGSQLDEHHAVRRDAGMFDVSHMLTVDLHGENVRQFLRGLVANNIDKLTVPGKALYTCMLNPAGGIIDDLIIYFLSESWFRLVVNAGTADKDIDWITLQSSQHAPDLTITPRRDLAMIAVQGPNARAKVWAVIPDSKAASEDLKPFQSVAFGNYFIARTGYTGEDGFEITLPADEAAAFWQKLHAAGVAPAGLGSRDTLRLEAGMNLYGQDMDETTNPLESGLAWTVDLKSERDFIGKQALLEKPVNQQLVGLVLLDKGVLRNHQKIITQHEGIAGEGEITSGGFSPTLNQSIALARIPVGIAAGEQVHVVVRDKQLAARVVKYPFVRNGQALI</sequence>
<keyword id="KW-0032">Aminotransferase</keyword>
<keyword id="KW-0808">Transferase</keyword>
<protein>
    <recommendedName>
        <fullName evidence="1">Aminomethyltransferase</fullName>
        <ecNumber evidence="1">2.1.2.10</ecNumber>
    </recommendedName>
    <alternativeName>
        <fullName evidence="1">Glycine cleavage system T protein</fullName>
    </alternativeName>
</protein>
<reference key="1">
    <citation type="journal article" date="2007" name="Environ. Microbiol.">
        <title>Whole-genome analysis of the ammonia-oxidizing bacterium, Nitrosomonas eutropha C91: implications for niche adaptation.</title>
        <authorList>
            <person name="Stein L.Y."/>
            <person name="Arp D.J."/>
            <person name="Berube P.M."/>
            <person name="Chain P.S."/>
            <person name="Hauser L."/>
            <person name="Jetten M.S."/>
            <person name="Klotz M.G."/>
            <person name="Larimer F.W."/>
            <person name="Norton J.M."/>
            <person name="Op den Camp H.J.M."/>
            <person name="Shin M."/>
            <person name="Wei X."/>
        </authorList>
    </citation>
    <scope>NUCLEOTIDE SEQUENCE [LARGE SCALE GENOMIC DNA]</scope>
    <source>
        <strain>DSM 101675 / C91 / Nm57</strain>
    </source>
</reference>
<proteinExistence type="inferred from homology"/>
<dbReference type="EC" id="2.1.2.10" evidence="1"/>
<dbReference type="EMBL" id="CP000450">
    <property type="protein sequence ID" value="ABI60185.1"/>
    <property type="molecule type" value="Genomic_DNA"/>
</dbReference>
<dbReference type="RefSeq" id="WP_011634986.1">
    <property type="nucleotide sequence ID" value="NC_008344.1"/>
</dbReference>
<dbReference type="SMR" id="Q0AEP7"/>
<dbReference type="STRING" id="335283.Neut_1955"/>
<dbReference type="KEGG" id="net:Neut_1955"/>
<dbReference type="eggNOG" id="COG0404">
    <property type="taxonomic scope" value="Bacteria"/>
</dbReference>
<dbReference type="HOGENOM" id="CLU_007884_10_2_4"/>
<dbReference type="OrthoDB" id="9774591at2"/>
<dbReference type="Proteomes" id="UP000001966">
    <property type="component" value="Chromosome"/>
</dbReference>
<dbReference type="GO" id="GO:0005829">
    <property type="term" value="C:cytosol"/>
    <property type="evidence" value="ECO:0007669"/>
    <property type="project" value="TreeGrafter"/>
</dbReference>
<dbReference type="GO" id="GO:0005960">
    <property type="term" value="C:glycine cleavage complex"/>
    <property type="evidence" value="ECO:0007669"/>
    <property type="project" value="InterPro"/>
</dbReference>
<dbReference type="GO" id="GO:0004047">
    <property type="term" value="F:aminomethyltransferase activity"/>
    <property type="evidence" value="ECO:0007669"/>
    <property type="project" value="UniProtKB-UniRule"/>
</dbReference>
<dbReference type="GO" id="GO:0008483">
    <property type="term" value="F:transaminase activity"/>
    <property type="evidence" value="ECO:0007669"/>
    <property type="project" value="UniProtKB-KW"/>
</dbReference>
<dbReference type="GO" id="GO:0019464">
    <property type="term" value="P:glycine decarboxylation via glycine cleavage system"/>
    <property type="evidence" value="ECO:0007669"/>
    <property type="project" value="UniProtKB-UniRule"/>
</dbReference>
<dbReference type="FunFam" id="3.30.70.1400:FF:000001">
    <property type="entry name" value="Aminomethyltransferase"/>
    <property type="match status" value="1"/>
</dbReference>
<dbReference type="FunFam" id="4.10.1250.10:FF:000001">
    <property type="entry name" value="Aminomethyltransferase"/>
    <property type="match status" value="1"/>
</dbReference>
<dbReference type="Gene3D" id="2.40.30.110">
    <property type="entry name" value="Aminomethyltransferase beta-barrel domains"/>
    <property type="match status" value="1"/>
</dbReference>
<dbReference type="Gene3D" id="3.30.70.1400">
    <property type="entry name" value="Aminomethyltransferase beta-barrel domains"/>
    <property type="match status" value="1"/>
</dbReference>
<dbReference type="Gene3D" id="4.10.1250.10">
    <property type="entry name" value="Aminomethyltransferase fragment"/>
    <property type="match status" value="1"/>
</dbReference>
<dbReference type="Gene3D" id="3.30.1360.120">
    <property type="entry name" value="Probable tRNA modification gtpase trme, domain 1"/>
    <property type="match status" value="1"/>
</dbReference>
<dbReference type="HAMAP" id="MF_00259">
    <property type="entry name" value="GcvT"/>
    <property type="match status" value="1"/>
</dbReference>
<dbReference type="InterPro" id="IPR006223">
    <property type="entry name" value="GCS_T"/>
</dbReference>
<dbReference type="InterPro" id="IPR022903">
    <property type="entry name" value="GCS_T_bac"/>
</dbReference>
<dbReference type="InterPro" id="IPR013977">
    <property type="entry name" value="GCST_C"/>
</dbReference>
<dbReference type="InterPro" id="IPR006222">
    <property type="entry name" value="GCV_T_N"/>
</dbReference>
<dbReference type="InterPro" id="IPR028896">
    <property type="entry name" value="GcvT/YgfZ/DmdA"/>
</dbReference>
<dbReference type="InterPro" id="IPR029043">
    <property type="entry name" value="GcvT/YgfZ_C"/>
</dbReference>
<dbReference type="InterPro" id="IPR027266">
    <property type="entry name" value="TrmE/GcvT_dom1"/>
</dbReference>
<dbReference type="NCBIfam" id="TIGR00528">
    <property type="entry name" value="gcvT"/>
    <property type="match status" value="1"/>
</dbReference>
<dbReference type="NCBIfam" id="NF001567">
    <property type="entry name" value="PRK00389.1"/>
    <property type="match status" value="1"/>
</dbReference>
<dbReference type="PANTHER" id="PTHR43757">
    <property type="entry name" value="AMINOMETHYLTRANSFERASE"/>
    <property type="match status" value="1"/>
</dbReference>
<dbReference type="PANTHER" id="PTHR43757:SF2">
    <property type="entry name" value="AMINOMETHYLTRANSFERASE, MITOCHONDRIAL"/>
    <property type="match status" value="1"/>
</dbReference>
<dbReference type="Pfam" id="PF01571">
    <property type="entry name" value="GCV_T"/>
    <property type="match status" value="1"/>
</dbReference>
<dbReference type="Pfam" id="PF08669">
    <property type="entry name" value="GCV_T_C"/>
    <property type="match status" value="1"/>
</dbReference>
<dbReference type="PIRSF" id="PIRSF006487">
    <property type="entry name" value="GcvT"/>
    <property type="match status" value="1"/>
</dbReference>
<dbReference type="SUPFAM" id="SSF101790">
    <property type="entry name" value="Aminomethyltransferase beta-barrel domain"/>
    <property type="match status" value="1"/>
</dbReference>
<dbReference type="SUPFAM" id="SSF103025">
    <property type="entry name" value="Folate-binding domain"/>
    <property type="match status" value="1"/>
</dbReference>
<organism>
    <name type="scientific">Nitrosomonas eutropha (strain DSM 101675 / C91 / Nm57)</name>
    <dbReference type="NCBI Taxonomy" id="335283"/>
    <lineage>
        <taxon>Bacteria</taxon>
        <taxon>Pseudomonadati</taxon>
        <taxon>Pseudomonadota</taxon>
        <taxon>Betaproteobacteria</taxon>
        <taxon>Nitrosomonadales</taxon>
        <taxon>Nitrosomonadaceae</taxon>
        <taxon>Nitrosomonas</taxon>
    </lineage>
</organism>